<gene>
    <name type="ordered locus">MCAP_0234.1</name>
</gene>
<name>Y234A_MYCCT</name>
<sequence length="97" mass="11099">MINNYFFAILLQDKISKNWAIGLILISICLAILLIVSIFVIKKIKQKNQHNRAISFSIDTNKSNDKRFWISFSLICCYLTCFVLSVAFLIIGIIALI</sequence>
<accession>P45619</accession>
<feature type="chain" id="PRO_0000066180" description="Uncharacterized protein MCAP_0234.1">
    <location>
        <begin position="1"/>
        <end position="97"/>
    </location>
</feature>
<protein>
    <recommendedName>
        <fullName>Uncharacterized protein MCAP_0234.1</fullName>
    </recommendedName>
    <alternativeName>
        <fullName>ORFB</fullName>
    </alternativeName>
</protein>
<proteinExistence type="predicted"/>
<organism>
    <name type="scientific">Mycoplasma capricolum subsp. capricolum (strain California kid / ATCC 27343 / NCTC 10154)</name>
    <dbReference type="NCBI Taxonomy" id="340047"/>
    <lineage>
        <taxon>Bacteria</taxon>
        <taxon>Bacillati</taxon>
        <taxon>Mycoplasmatota</taxon>
        <taxon>Mollicutes</taxon>
        <taxon>Mycoplasmataceae</taxon>
        <taxon>Mycoplasma</taxon>
    </lineage>
</organism>
<reference key="1">
    <citation type="journal article" date="1994" name="Protein Sci.">
        <title>Unique dicistronic operon (ptsI-crr) in Mycoplasma capricolum encoding enzyme I and the glucose-specific enzyme IIA of the phosphoenolpyruvate:sugar phosphotransferase system: cloning, sequencing, promoter analysis, and protein characterization.</title>
        <authorList>
            <person name="Zhu P.-P."/>
            <person name="Reizer J."/>
            <person name="Peterkofsky A."/>
        </authorList>
    </citation>
    <scope>NUCLEOTIDE SEQUENCE [GENOMIC DNA]</scope>
</reference>
<reference key="2">
    <citation type="submission" date="2005-09" db="EMBL/GenBank/DDBJ databases">
        <authorList>
            <person name="Glass J.I."/>
            <person name="Lartigue C."/>
            <person name="Pfannkoch C."/>
            <person name="Baden-Tillson H."/>
            <person name="Smith H.O."/>
            <person name="Venter J.C."/>
            <person name="Roske K."/>
            <person name="Wise K.S."/>
            <person name="Calcutt M.J."/>
            <person name="Nelson W.C."/>
            <person name="Nierman W.C."/>
        </authorList>
    </citation>
    <scope>NUCLEOTIDE SEQUENCE [LARGE SCALE GENOMIC DNA]</scope>
    <source>
        <strain>California kid / ATCC 27343 / NCTC 10154</strain>
    </source>
</reference>
<dbReference type="EMBL" id="U15110">
    <property type="protein sequence ID" value="AAA70408.1"/>
    <property type="molecule type" value="Genomic_DNA"/>
</dbReference>
<dbReference type="EMBL" id="CP000123">
    <property type="status" value="NOT_ANNOTATED_CDS"/>
    <property type="molecule type" value="Genomic_DNA"/>
</dbReference>
<dbReference type="SMR" id="P45619"/>
<dbReference type="Proteomes" id="UP000001928">
    <property type="component" value="Chromosome"/>
</dbReference>